<reference evidence="4" key="1">
    <citation type="journal article" date="2007" name="Nature">
        <title>Evolution of genes and genomes on the Drosophila phylogeny.</title>
        <authorList>
            <consortium name="Drosophila 12 genomes consortium"/>
        </authorList>
    </citation>
    <scope>NUCLEOTIDE SEQUENCE [LARGE SCALE GENOMIC DNA]</scope>
    <source>
        <strain evidence="4">Tucson 15010-1051.87</strain>
    </source>
</reference>
<feature type="chain" id="PRO_0000389239" description="Calcium channel flower">
    <location>
        <begin position="1"/>
        <end position="196"/>
    </location>
</feature>
<feature type="transmembrane region" description="Helical" evidence="2">
    <location>
        <begin position="36"/>
        <end position="56"/>
    </location>
</feature>
<feature type="transmembrane region" description="Helical" evidence="2">
    <location>
        <begin position="67"/>
        <end position="89"/>
    </location>
</feature>
<feature type="transmembrane region" description="Helical" evidence="2">
    <location>
        <begin position="114"/>
        <end position="134"/>
    </location>
</feature>
<feature type="site" description="Calcium ion selectivity" evidence="1">
    <location>
        <position position="80"/>
    </location>
</feature>
<organism>
    <name type="scientific">Drosophila virilis</name>
    <name type="common">Fruit fly</name>
    <dbReference type="NCBI Taxonomy" id="7244"/>
    <lineage>
        <taxon>Eukaryota</taxon>
        <taxon>Metazoa</taxon>
        <taxon>Ecdysozoa</taxon>
        <taxon>Arthropoda</taxon>
        <taxon>Hexapoda</taxon>
        <taxon>Insecta</taxon>
        <taxon>Pterygota</taxon>
        <taxon>Neoptera</taxon>
        <taxon>Endopterygota</taxon>
        <taxon>Diptera</taxon>
        <taxon>Brachycera</taxon>
        <taxon>Muscomorpha</taxon>
        <taxon>Ephydroidea</taxon>
        <taxon>Drosophilidae</taxon>
        <taxon>Drosophila</taxon>
    </lineage>
</organism>
<keyword id="KW-0106">Calcium</keyword>
<keyword id="KW-0107">Calcium channel</keyword>
<keyword id="KW-0109">Calcium transport</keyword>
<keyword id="KW-1003">Cell membrane</keyword>
<keyword id="KW-0966">Cell projection</keyword>
<keyword id="KW-0968">Cytoplasmic vesicle</keyword>
<keyword id="KW-0254">Endocytosis</keyword>
<keyword id="KW-0967">Endosome</keyword>
<keyword id="KW-0407">Ion channel</keyword>
<keyword id="KW-0406">Ion transport</keyword>
<keyword id="KW-0472">Membrane</keyword>
<keyword id="KW-1185">Reference proteome</keyword>
<keyword id="KW-0770">Synapse</keyword>
<keyword id="KW-0812">Transmembrane</keyword>
<keyword id="KW-1133">Transmembrane helix</keyword>
<keyword id="KW-0813">Transport</keyword>
<gene>
    <name evidence="1" type="primary">flower</name>
    <name type="ORF">GJ13956</name>
</gene>
<protein>
    <recommendedName>
        <fullName evidence="1">Calcium channel flower</fullName>
    </recommendedName>
</protein>
<evidence type="ECO:0000250" key="1">
    <source>
        <dbReference type="UniProtKB" id="Q95T12"/>
    </source>
</evidence>
<evidence type="ECO:0000255" key="2"/>
<evidence type="ECO:0000305" key="3"/>
<evidence type="ECO:0000312" key="4">
    <source>
        <dbReference type="EMBL" id="EDW70757.1"/>
    </source>
</evidence>
<proteinExistence type="inferred from homology"/>
<name>FLOWR_DROVI</name>
<accession>B4LIH0</accession>
<dbReference type="EMBL" id="CH940647">
    <property type="protein sequence ID" value="EDW70757.1"/>
    <property type="status" value="ALT_SEQ"/>
    <property type="molecule type" value="Genomic_DNA"/>
</dbReference>
<dbReference type="FunCoup" id="B4LIH0">
    <property type="interactions" value="781"/>
</dbReference>
<dbReference type="EnsemblMetazoa" id="FBtr0229881">
    <property type="protein sequence ID" value="FBpp0228373"/>
    <property type="gene ID" value="FBgn0201174"/>
</dbReference>
<dbReference type="EnsemblMetazoa" id="XM_002048379.3">
    <property type="protein sequence ID" value="XP_002048415.2"/>
    <property type="gene ID" value="LOC6622396"/>
</dbReference>
<dbReference type="GeneID" id="6622396"/>
<dbReference type="KEGG" id="dvi:6622396"/>
<dbReference type="CTD" id="39720"/>
<dbReference type="eggNOG" id="KOG4085">
    <property type="taxonomic scope" value="Eukaryota"/>
</dbReference>
<dbReference type="InParanoid" id="B4LIH0"/>
<dbReference type="OrthoDB" id="9934994at2759"/>
<dbReference type="Proteomes" id="UP000008792">
    <property type="component" value="Unassembled WGS sequence"/>
</dbReference>
<dbReference type="GO" id="GO:0042995">
    <property type="term" value="C:cell projection"/>
    <property type="evidence" value="ECO:0007669"/>
    <property type="project" value="UniProtKB-KW"/>
</dbReference>
<dbReference type="GO" id="GO:0005768">
    <property type="term" value="C:endosome"/>
    <property type="evidence" value="ECO:0007669"/>
    <property type="project" value="UniProtKB-SubCell"/>
</dbReference>
<dbReference type="GO" id="GO:0042734">
    <property type="term" value="C:presynaptic membrane"/>
    <property type="evidence" value="ECO:0007669"/>
    <property type="project" value="UniProtKB-SubCell"/>
</dbReference>
<dbReference type="GO" id="GO:0030672">
    <property type="term" value="C:synaptic vesicle membrane"/>
    <property type="evidence" value="ECO:0000250"/>
    <property type="project" value="UniProtKB"/>
</dbReference>
<dbReference type="GO" id="GO:0005262">
    <property type="term" value="F:calcium channel activity"/>
    <property type="evidence" value="ECO:0007669"/>
    <property type="project" value="UniProtKB-KW"/>
</dbReference>
<dbReference type="GO" id="GO:0042802">
    <property type="term" value="F:identical protein binding"/>
    <property type="evidence" value="ECO:0007669"/>
    <property type="project" value="EnsemblMetazoa"/>
</dbReference>
<dbReference type="GO" id="GO:0150008">
    <property type="term" value="P:bulk synaptic vesicle endocytosis"/>
    <property type="evidence" value="ECO:0007669"/>
    <property type="project" value="EnsemblMetazoa"/>
</dbReference>
<dbReference type="GO" id="GO:0035212">
    <property type="term" value="P:cell competition in a multicellular organism"/>
    <property type="evidence" value="ECO:0007669"/>
    <property type="project" value="EnsemblMetazoa"/>
</dbReference>
<dbReference type="GO" id="GO:0150007">
    <property type="term" value="P:clathrin-dependent synaptic vesicle endocytosis"/>
    <property type="evidence" value="ECO:0007669"/>
    <property type="project" value="EnsemblMetazoa"/>
</dbReference>
<dbReference type="GO" id="GO:0046530">
    <property type="term" value="P:photoreceptor cell differentiation"/>
    <property type="evidence" value="ECO:0000250"/>
    <property type="project" value="UniProtKB"/>
</dbReference>
<dbReference type="GO" id="GO:0043525">
    <property type="term" value="P:positive regulation of neuron apoptotic process"/>
    <property type="evidence" value="ECO:0007669"/>
    <property type="project" value="EnsemblMetazoa"/>
</dbReference>
<dbReference type="GO" id="GO:0099533">
    <property type="term" value="P:positive regulation of presynaptic cytosolic calcium concentration"/>
    <property type="evidence" value="ECO:0007669"/>
    <property type="project" value="EnsemblMetazoa"/>
</dbReference>
<dbReference type="GO" id="GO:0048488">
    <property type="term" value="P:synaptic vesicle endocytosis"/>
    <property type="evidence" value="ECO:0000250"/>
    <property type="project" value="UniProtKB"/>
</dbReference>
<dbReference type="InterPro" id="IPR019365">
    <property type="entry name" value="TVP18/Ca-channel_flower"/>
</dbReference>
<dbReference type="PANTHER" id="PTHR13314">
    <property type="entry name" value="CALCIUM CHANNEL FLOWER HOMOLOG"/>
    <property type="match status" value="1"/>
</dbReference>
<dbReference type="PANTHER" id="PTHR13314:SF2">
    <property type="entry name" value="CALCIUM CHANNEL FLOWER HOMOLOG"/>
    <property type="match status" value="1"/>
</dbReference>
<dbReference type="Pfam" id="PF10233">
    <property type="entry name" value="Cg6151-P"/>
    <property type="match status" value="1"/>
</dbReference>
<dbReference type="SMART" id="SM01077">
    <property type="entry name" value="Cg6151-P"/>
    <property type="match status" value="1"/>
</dbReference>
<sequence>MSFAEKLTGLMARPNQQDPAGGPEQPWYLKYGSRVLGIVAAFFAILFGLWNVLSIIGLSVSCLVAGIIQMLAGFVVMALEAPCCFICIEKVGSVADMMDTKPLYFRAGLYCAMAVPPIFMCFGLASLFGSGLIFATGAVYGMMALGKKASAAEMRAAAQQASYGGNAAPTTNDRAGIVNNAQPFSFTGAVGTDSNV</sequence>
<comment type="function">
    <text evidence="1">Transmembrane protein which mediates synaptic endocytosis, fitness-based cell culling, neuronal culling, morphogen gradient scaling, and calcium transport. Regulates synaptic endocytosis and hence couples exo- with endocytosis. Controls two major modes of synaptic vesicle (SV) endocytosis in the synaptic boutons of neuromuscular junctions (NMJs); Ca(2+) channel-independent Clathrin-mediated endocytosis (CME) in response to mild stimulation, and Ca(2+) channel-dependent activity-dependent bulk endocytosis (ADBE) in response to strong stimulation. Functions in ADBE and subsequent SV reformation from bulk endosomes by initiating Ca(2+) channel-dependent phosphatidylinositol 4,5-bisphosphate (PtdIns(4,5)P2) compartmentalization in synaptic boutons. There it acts at the periactive zone to provide the low Ca(2+) levels required to initiate Calcineurin activation and upregulate PtdIns(4,5)P2. Conversely PtdIns(4,5)P2 enhances fwe Ca(2+) channel-activity, establishing a positive feedback loop that induces PtdIns(4,5)P2 microdomain at the periactive zone. These microdomains trigger bulk membrane invagination (i.e. ADBE) by triggering actin polymerization while also promoting localization of fwe to bulk endosomes, thereby removing the ADBE trigger to reduce endocytosis and prevent excess membrane uptake. PtdIns(4,5)P2 then promotes SV reformation from the bulk endosomes, to coordinate ADBE and subsequent SV reformation. Different combinations of the flower isoforms at the cell membrane are also required for the identification and elimination of suboptimal or supernumerary cells during development, regeneration, and adulthood. Required for the recognition and elimination of unfit cells in the developing wing during cell competition. In the developing pupal retina, mediates the elimination of unwanted postmitotic neurons, including supernumerary photoreceptor neurons that form at the periphery of the retina and are contained within incomplete ommatidia units. Also required for efficient elimination and replacement of old neurons by newly generated neurons during regeneration in the adult brain following mechanical injury. Downstream of the flower fitness fingerprints, cells identified as unwanted or unfit are eliminated via apoptosis through the expression of ahuizotl (azot). However, the cells marked for elimination by the flower isoforms only undergo apoptosis if additional thresholds are met; (1) their neighboring fit/healthy cells express different levels of the fwe isoforms, and (2) the levels of the protective signal SPARC expressed by the loser or unwanted cells are unable to inhibit caspase activation. These additional thresholds for flower-mediated apoptosis, allows useful cells to recover from transient and limited stress before they are unnecessarily eliminated. Functions with dally and magu in a mechanism of scaling, which utilises apoptosis to ensure that the dpp morphogen gradient, which mediates organ growth, remains proportional to the size of the growing wing. In this mechanism, fwe represses dally- and Magu-dependent activity in expanding the gradient, and dally/Magu inhibits fwe-dependent apoptosis to keep cell death rate low. When the levels of these different proteins are optimally regulated the gradient correctly scales with organ growth but when this fails, fwe-mediated apoptosis is activated to trim the developing tissue to match the correct size of the gradient.</text>
</comment>
<comment type="activity regulation">
    <text evidence="1">Channel activity is inhibited by La(3+), which reduces Ca(2+) influx and thus inhibits it's function in promoting activity-dependent bulk endocytosis (ADBE) in response to high stimuli.</text>
</comment>
<comment type="subunit">
    <text evidence="1">Homomultimer. Associates with the dally/ magu complex.</text>
</comment>
<comment type="subcellular location">
    <subcellularLocation>
        <location evidence="2">Cell membrane</location>
        <topology evidence="2">Multi-pass membrane protein</topology>
    </subcellularLocation>
    <subcellularLocation>
        <location evidence="1">Cytoplasmic vesicle</location>
        <location evidence="1">Secretory vesicle</location>
        <location evidence="1">Synaptic vesicle membrane</location>
        <topology evidence="1">Multi-pass membrane protein</topology>
    </subcellularLocation>
    <subcellularLocation>
        <location evidence="1">Presynaptic cell membrane</location>
    </subcellularLocation>
    <subcellularLocation>
        <location evidence="1">Endosome</location>
    </subcellularLocation>
    <text evidence="1">Upon fusion of the synaptic vesicle (SV) with the presynaptic membrane, protein transfers from the SV to the periactive zones where endocytosis is known to occur. Upon high K(+) stimulation, expression levels in NMJ boutons are higher in bulk endosomes than in synaptic vesicles, suggesting that it is recycled to bulk endosomes after it activates ADBE.</text>
</comment>
<comment type="similarity">
    <text evidence="3">Belongs to the calcium channel flower family.</text>
</comment>
<comment type="sequence caution" evidence="3">
    <conflict type="erroneous gene model prediction">
        <sequence resource="EMBL-CDS" id="EDW70757"/>
    </conflict>
</comment>